<gene>
    <name evidence="1" type="primary">psbN</name>
</gene>
<reference key="1">
    <citation type="journal article" date="2007" name="Mol. Biol. Evol.">
        <title>The complete chloroplast genome of the chlorarachniophyte Bigelowiella natans: evidence for independent origins of chlorarachniophyte and euglenid secondary endosymbionts.</title>
        <authorList>
            <person name="Rogers M.B."/>
            <person name="Gilson P.R."/>
            <person name="Su V."/>
            <person name="McFadden G.I."/>
            <person name="Keeling P.J."/>
        </authorList>
    </citation>
    <scope>NUCLEOTIDE SEQUENCE [LARGE SCALE GENOMIC DNA]</scope>
</reference>
<proteinExistence type="inferred from homology"/>
<accession>Q06J22</accession>
<comment type="function">
    <text evidence="1">May play a role in photosystem I and II biogenesis.</text>
</comment>
<comment type="subcellular location">
    <subcellularLocation>
        <location evidence="1">Plastid</location>
        <location evidence="1">Chloroplast thylakoid membrane</location>
        <topology evidence="1">Single-pass membrane protein</topology>
    </subcellularLocation>
</comment>
<comment type="similarity">
    <text evidence="1">Belongs to the PsbN family.</text>
</comment>
<comment type="caution">
    <text evidence="1">Originally thought to be a component of PSII; based on experiments in Synechocystis, N.tabacum and barley, and its absence from PSII in T.elongatus and T.vulcanus, this is probably not true.</text>
</comment>
<dbReference type="EMBL" id="DQ851108">
    <property type="protein sequence ID" value="ABG91437.1"/>
    <property type="molecule type" value="Genomic_DNA"/>
</dbReference>
<dbReference type="RefSeq" id="YP_778605.1">
    <property type="nucleotide sequence ID" value="NC_008408.1"/>
</dbReference>
<dbReference type="SMR" id="Q06J22"/>
<dbReference type="GeneID" id="4353022"/>
<dbReference type="GO" id="GO:0009535">
    <property type="term" value="C:chloroplast thylakoid membrane"/>
    <property type="evidence" value="ECO:0007669"/>
    <property type="project" value="UniProtKB-SubCell"/>
</dbReference>
<dbReference type="GO" id="GO:0015979">
    <property type="term" value="P:photosynthesis"/>
    <property type="evidence" value="ECO:0007669"/>
    <property type="project" value="InterPro"/>
</dbReference>
<dbReference type="HAMAP" id="MF_00293">
    <property type="entry name" value="PSII_PsbN"/>
    <property type="match status" value="1"/>
</dbReference>
<dbReference type="InterPro" id="IPR003398">
    <property type="entry name" value="PSII_PsbN"/>
</dbReference>
<dbReference type="PANTHER" id="PTHR35326">
    <property type="entry name" value="PROTEIN PSBN"/>
    <property type="match status" value="1"/>
</dbReference>
<dbReference type="PANTHER" id="PTHR35326:SF3">
    <property type="entry name" value="PROTEIN PSBN"/>
    <property type="match status" value="1"/>
</dbReference>
<dbReference type="Pfam" id="PF02468">
    <property type="entry name" value="PsbN"/>
    <property type="match status" value="1"/>
</dbReference>
<geneLocation type="chloroplast"/>
<feature type="chain" id="PRO_0000295867" description="Protein PsbN">
    <location>
        <begin position="1"/>
        <end position="44"/>
    </location>
</feature>
<feature type="transmembrane region" description="Helical" evidence="1">
    <location>
        <begin position="6"/>
        <end position="26"/>
    </location>
</feature>
<evidence type="ECO:0000255" key="1">
    <source>
        <dbReference type="HAMAP-Rule" id="MF_00293"/>
    </source>
</evidence>
<organism>
    <name type="scientific">Bigelowiella natans</name>
    <name type="common">Pedinomonas minutissima</name>
    <name type="synonym">Chlorarachnion sp. (strain CCMP621)</name>
    <dbReference type="NCBI Taxonomy" id="227086"/>
    <lineage>
        <taxon>Eukaryota</taxon>
        <taxon>Sar</taxon>
        <taxon>Rhizaria</taxon>
        <taxon>Cercozoa</taxon>
        <taxon>Chlorarachniophyceae</taxon>
        <taxon>Bigelowiella</taxon>
    </lineage>
</organism>
<name>PSBN_BIGNA</name>
<sequence>MDGTAFFFTIFVWFLLISVTGYSIYVGFGPTSSALRDPFEEHED</sequence>
<protein>
    <recommendedName>
        <fullName evidence="1">Protein PsbN</fullName>
    </recommendedName>
</protein>
<keyword id="KW-0150">Chloroplast</keyword>
<keyword id="KW-0472">Membrane</keyword>
<keyword id="KW-0934">Plastid</keyword>
<keyword id="KW-0793">Thylakoid</keyword>
<keyword id="KW-0812">Transmembrane</keyword>
<keyword id="KW-1133">Transmembrane helix</keyword>